<keyword id="KW-0687">Ribonucleoprotein</keyword>
<keyword id="KW-0689">Ribosomal protein</keyword>
<keyword id="KW-0694">RNA-binding</keyword>
<keyword id="KW-0699">rRNA-binding</keyword>
<name>RL23_CLOBM</name>
<proteinExistence type="inferred from homology"/>
<evidence type="ECO:0000255" key="1">
    <source>
        <dbReference type="HAMAP-Rule" id="MF_01369"/>
    </source>
</evidence>
<evidence type="ECO:0000305" key="2"/>
<comment type="function">
    <text evidence="1">One of the early assembly proteins it binds 23S rRNA. One of the proteins that surrounds the polypeptide exit tunnel on the outside of the ribosome. Forms the main docking site for trigger factor binding to the ribosome.</text>
</comment>
<comment type="subunit">
    <text evidence="1">Part of the 50S ribosomal subunit. Contacts protein L29, and trigger factor when it is bound to the ribosome.</text>
</comment>
<comment type="similarity">
    <text evidence="1">Belongs to the universal ribosomal protein uL23 family.</text>
</comment>
<protein>
    <recommendedName>
        <fullName evidence="1">Large ribosomal subunit protein uL23</fullName>
    </recommendedName>
    <alternativeName>
        <fullName evidence="2">50S ribosomal protein L23</fullName>
    </alternativeName>
</protein>
<feature type="chain" id="PRO_1000144557" description="Large ribosomal subunit protein uL23">
    <location>
        <begin position="1"/>
        <end position="97"/>
    </location>
</feature>
<sequence>MKLTNYDIIRRPLITEKTMASMADKKYTFVVDIHANKSQIKNAIETIFDVKVEDVKTARIMGKTKRVGVHIGKRPDYKKAIVKLTEDSKTIEFFEGL</sequence>
<organism>
    <name type="scientific">Clostridium botulinum (strain Loch Maree / Type A3)</name>
    <dbReference type="NCBI Taxonomy" id="498214"/>
    <lineage>
        <taxon>Bacteria</taxon>
        <taxon>Bacillati</taxon>
        <taxon>Bacillota</taxon>
        <taxon>Clostridia</taxon>
        <taxon>Eubacteriales</taxon>
        <taxon>Clostridiaceae</taxon>
        <taxon>Clostridium</taxon>
    </lineage>
</organism>
<gene>
    <name evidence="1" type="primary">rplW</name>
    <name type="ordered locus">CLK_2922</name>
</gene>
<dbReference type="EMBL" id="CP000962">
    <property type="protein sequence ID" value="ACA55810.1"/>
    <property type="molecule type" value="Genomic_DNA"/>
</dbReference>
<dbReference type="RefSeq" id="WP_003357444.1">
    <property type="nucleotide sequence ID" value="NC_010520.1"/>
</dbReference>
<dbReference type="SMR" id="B1KSM3"/>
<dbReference type="GeneID" id="92940248"/>
<dbReference type="KEGG" id="cbl:CLK_2922"/>
<dbReference type="HOGENOM" id="CLU_037562_3_2_9"/>
<dbReference type="GO" id="GO:1990904">
    <property type="term" value="C:ribonucleoprotein complex"/>
    <property type="evidence" value="ECO:0007669"/>
    <property type="project" value="UniProtKB-KW"/>
</dbReference>
<dbReference type="GO" id="GO:0005840">
    <property type="term" value="C:ribosome"/>
    <property type="evidence" value="ECO:0007669"/>
    <property type="project" value="UniProtKB-KW"/>
</dbReference>
<dbReference type="GO" id="GO:0019843">
    <property type="term" value="F:rRNA binding"/>
    <property type="evidence" value="ECO:0007669"/>
    <property type="project" value="UniProtKB-UniRule"/>
</dbReference>
<dbReference type="GO" id="GO:0003735">
    <property type="term" value="F:structural constituent of ribosome"/>
    <property type="evidence" value="ECO:0007669"/>
    <property type="project" value="InterPro"/>
</dbReference>
<dbReference type="GO" id="GO:0006412">
    <property type="term" value="P:translation"/>
    <property type="evidence" value="ECO:0007669"/>
    <property type="project" value="UniProtKB-UniRule"/>
</dbReference>
<dbReference type="FunFam" id="3.30.70.330:FF:000001">
    <property type="entry name" value="50S ribosomal protein L23"/>
    <property type="match status" value="1"/>
</dbReference>
<dbReference type="Gene3D" id="3.30.70.330">
    <property type="match status" value="1"/>
</dbReference>
<dbReference type="HAMAP" id="MF_01369_B">
    <property type="entry name" value="Ribosomal_uL23_B"/>
    <property type="match status" value="1"/>
</dbReference>
<dbReference type="InterPro" id="IPR012677">
    <property type="entry name" value="Nucleotide-bd_a/b_plait_sf"/>
</dbReference>
<dbReference type="InterPro" id="IPR013025">
    <property type="entry name" value="Ribosomal_uL23-like"/>
</dbReference>
<dbReference type="InterPro" id="IPR012678">
    <property type="entry name" value="Ribosomal_uL23/eL15/eS24_sf"/>
</dbReference>
<dbReference type="InterPro" id="IPR001014">
    <property type="entry name" value="Ribosomal_uL23_CS"/>
</dbReference>
<dbReference type="NCBIfam" id="NF004363">
    <property type="entry name" value="PRK05738.2-4"/>
    <property type="match status" value="1"/>
</dbReference>
<dbReference type="PANTHER" id="PTHR11620">
    <property type="entry name" value="60S RIBOSOMAL PROTEIN L23A"/>
    <property type="match status" value="1"/>
</dbReference>
<dbReference type="Pfam" id="PF00276">
    <property type="entry name" value="Ribosomal_L23"/>
    <property type="match status" value="1"/>
</dbReference>
<dbReference type="SUPFAM" id="SSF54189">
    <property type="entry name" value="Ribosomal proteins S24e, L23 and L15e"/>
    <property type="match status" value="1"/>
</dbReference>
<dbReference type="PROSITE" id="PS00050">
    <property type="entry name" value="RIBOSOMAL_L23"/>
    <property type="match status" value="1"/>
</dbReference>
<accession>B1KSM3</accession>
<reference key="1">
    <citation type="journal article" date="2007" name="PLoS ONE">
        <title>Analysis of the neurotoxin complex genes in Clostridium botulinum A1-A4 and B1 strains: BoNT/A3, /Ba4 and /B1 clusters are located within plasmids.</title>
        <authorList>
            <person name="Smith T.J."/>
            <person name="Hill K.K."/>
            <person name="Foley B.T."/>
            <person name="Detter J.C."/>
            <person name="Munk A.C."/>
            <person name="Bruce D.C."/>
            <person name="Doggett N.A."/>
            <person name="Smith L.A."/>
            <person name="Marks J.D."/>
            <person name="Xie G."/>
            <person name="Brettin T.S."/>
        </authorList>
    </citation>
    <scope>NUCLEOTIDE SEQUENCE [LARGE SCALE GENOMIC DNA]</scope>
    <source>
        <strain>Loch Maree / Type A3</strain>
    </source>
</reference>